<name>YIHR_ECOLI</name>
<comment type="induction">
    <text evidence="1">Induced during growth with sulfoquinovose.</text>
</comment>
<dbReference type="EMBL" id="L19201">
    <property type="protein sequence ID" value="AAB03012.1"/>
    <property type="molecule type" value="Genomic_DNA"/>
</dbReference>
<dbReference type="EMBL" id="U00096">
    <property type="protein sequence ID" value="AAC76876.1"/>
    <property type="molecule type" value="Genomic_DNA"/>
</dbReference>
<dbReference type="EMBL" id="AP009048">
    <property type="protein sequence ID" value="BAE77430.1"/>
    <property type="molecule type" value="Genomic_DNA"/>
</dbReference>
<dbReference type="PIR" id="S40823">
    <property type="entry name" value="S40823"/>
</dbReference>
<dbReference type="RefSeq" id="NP_418315.3">
    <property type="nucleotide sequence ID" value="NC_000913.3"/>
</dbReference>
<dbReference type="SMR" id="P32139"/>
<dbReference type="BioGRID" id="4262637">
    <property type="interactions" value="7"/>
</dbReference>
<dbReference type="DIP" id="DIP-12499N"/>
<dbReference type="FunCoup" id="P32139">
    <property type="interactions" value="318"/>
</dbReference>
<dbReference type="IntAct" id="P32139">
    <property type="interactions" value="2"/>
</dbReference>
<dbReference type="STRING" id="511145.b3879"/>
<dbReference type="PaxDb" id="511145-b3879"/>
<dbReference type="EnsemblBacteria" id="AAC76876">
    <property type="protein sequence ID" value="AAC76876"/>
    <property type="gene ID" value="b3879"/>
</dbReference>
<dbReference type="GeneID" id="948375"/>
<dbReference type="KEGG" id="ecj:JW3850"/>
<dbReference type="KEGG" id="eco:b3879"/>
<dbReference type="PATRIC" id="fig|1411691.4.peg.2832"/>
<dbReference type="EchoBASE" id="EB1790"/>
<dbReference type="eggNOG" id="COG2017">
    <property type="taxonomic scope" value="Bacteria"/>
</dbReference>
<dbReference type="HOGENOM" id="CLU_052486_1_1_6"/>
<dbReference type="InParanoid" id="P32139"/>
<dbReference type="OMA" id="NIDLIRP"/>
<dbReference type="OrthoDB" id="9808779at2"/>
<dbReference type="PhylomeDB" id="P32139"/>
<dbReference type="BioCyc" id="EcoCyc:EG11844-MONOMER"/>
<dbReference type="PRO" id="PR:P32139"/>
<dbReference type="Proteomes" id="UP000000625">
    <property type="component" value="Chromosome"/>
</dbReference>
<dbReference type="GO" id="GO:0004034">
    <property type="term" value="F:aldose 1-epimerase activity"/>
    <property type="evidence" value="ECO:0000318"/>
    <property type="project" value="GO_Central"/>
</dbReference>
<dbReference type="GO" id="GO:0030246">
    <property type="term" value="F:carbohydrate binding"/>
    <property type="evidence" value="ECO:0007669"/>
    <property type="project" value="InterPro"/>
</dbReference>
<dbReference type="GO" id="GO:1902777">
    <property type="term" value="P:6-sulfoquinovose(1-) catabolic process"/>
    <property type="evidence" value="ECO:0000270"/>
    <property type="project" value="EcoCyc"/>
</dbReference>
<dbReference type="GO" id="GO:0033499">
    <property type="term" value="P:galactose catabolic process via UDP-galactose, Leloir pathway"/>
    <property type="evidence" value="ECO:0000318"/>
    <property type="project" value="GO_Central"/>
</dbReference>
<dbReference type="GO" id="GO:0006006">
    <property type="term" value="P:glucose metabolic process"/>
    <property type="evidence" value="ECO:0000318"/>
    <property type="project" value="GO_Central"/>
</dbReference>
<dbReference type="GO" id="GO:0044010">
    <property type="term" value="P:single-species biofilm formation"/>
    <property type="evidence" value="ECO:0000315"/>
    <property type="project" value="EcoCyc"/>
</dbReference>
<dbReference type="CDD" id="cd09022">
    <property type="entry name" value="Aldose_epim_Ec_YihR"/>
    <property type="match status" value="1"/>
</dbReference>
<dbReference type="FunFam" id="2.70.98.10:FF:000009">
    <property type="entry name" value="Putative aldose-1-epimerase"/>
    <property type="match status" value="1"/>
</dbReference>
<dbReference type="Gene3D" id="2.70.98.10">
    <property type="match status" value="1"/>
</dbReference>
<dbReference type="InterPro" id="IPR008183">
    <property type="entry name" value="Aldose_1/G6P_1-epimerase"/>
</dbReference>
<dbReference type="InterPro" id="IPR011013">
    <property type="entry name" value="Gal_mutarotase_sf_dom"/>
</dbReference>
<dbReference type="InterPro" id="IPR014718">
    <property type="entry name" value="GH-type_carb-bd"/>
</dbReference>
<dbReference type="InterPro" id="IPR037480">
    <property type="entry name" value="YihR-like"/>
</dbReference>
<dbReference type="NCBIfam" id="NF011719">
    <property type="entry name" value="PRK15172.1"/>
    <property type="match status" value="1"/>
</dbReference>
<dbReference type="PANTHER" id="PTHR10091">
    <property type="entry name" value="ALDOSE-1-EPIMERASE"/>
    <property type="match status" value="1"/>
</dbReference>
<dbReference type="PANTHER" id="PTHR10091:SF0">
    <property type="entry name" value="GALACTOSE MUTAROTASE"/>
    <property type="match status" value="1"/>
</dbReference>
<dbReference type="Pfam" id="PF01263">
    <property type="entry name" value="Aldose_epim"/>
    <property type="match status" value="1"/>
</dbReference>
<dbReference type="SUPFAM" id="SSF74650">
    <property type="entry name" value="Galactose mutarotase-like"/>
    <property type="match status" value="1"/>
</dbReference>
<organism>
    <name type="scientific">Escherichia coli (strain K12)</name>
    <dbReference type="NCBI Taxonomy" id="83333"/>
    <lineage>
        <taxon>Bacteria</taxon>
        <taxon>Pseudomonadati</taxon>
        <taxon>Pseudomonadota</taxon>
        <taxon>Gammaproteobacteria</taxon>
        <taxon>Enterobacterales</taxon>
        <taxon>Enterobacteriaceae</taxon>
        <taxon>Escherichia</taxon>
    </lineage>
</organism>
<gene>
    <name type="primary">yihR</name>
    <name type="ordered locus">b3879</name>
    <name type="ordered locus">JW3850</name>
</gene>
<protein>
    <recommendedName>
        <fullName>Uncharacterized protein YihR</fullName>
    </recommendedName>
</protein>
<accession>P32139</accession>
<accession>Q2M8H6</accession>
<feature type="chain" id="PRO_0000169677" description="Uncharacterized protein YihR">
    <location>
        <begin position="1"/>
        <end position="308"/>
    </location>
</feature>
<reference key="1">
    <citation type="journal article" date="1993" name="Nucleic Acids Res.">
        <title>Analysis of the Escherichia coli genome. III. DNA sequence of the region from 87.2 to 89.2 minutes.</title>
        <authorList>
            <person name="Plunkett G. III"/>
            <person name="Burland V."/>
            <person name="Daniels D.L."/>
            <person name="Blattner F.R."/>
        </authorList>
    </citation>
    <scope>NUCLEOTIDE SEQUENCE [LARGE SCALE GENOMIC DNA]</scope>
    <source>
        <strain>K12 / MG1655 / ATCC 47076</strain>
    </source>
</reference>
<reference key="2">
    <citation type="journal article" date="1997" name="Science">
        <title>The complete genome sequence of Escherichia coli K-12.</title>
        <authorList>
            <person name="Blattner F.R."/>
            <person name="Plunkett G. III"/>
            <person name="Bloch C.A."/>
            <person name="Perna N.T."/>
            <person name="Burland V."/>
            <person name="Riley M."/>
            <person name="Collado-Vides J."/>
            <person name="Glasner J.D."/>
            <person name="Rode C.K."/>
            <person name="Mayhew G.F."/>
            <person name="Gregor J."/>
            <person name="Davis N.W."/>
            <person name="Kirkpatrick H.A."/>
            <person name="Goeden M.A."/>
            <person name="Rose D.J."/>
            <person name="Mau B."/>
            <person name="Shao Y."/>
        </authorList>
    </citation>
    <scope>NUCLEOTIDE SEQUENCE [LARGE SCALE GENOMIC DNA]</scope>
    <source>
        <strain>K12 / MG1655 / ATCC 47076</strain>
    </source>
</reference>
<reference key="3">
    <citation type="journal article" date="2006" name="Mol. Syst. Biol.">
        <title>Highly accurate genome sequences of Escherichia coli K-12 strains MG1655 and W3110.</title>
        <authorList>
            <person name="Hayashi K."/>
            <person name="Morooka N."/>
            <person name="Yamamoto Y."/>
            <person name="Fujita K."/>
            <person name="Isono K."/>
            <person name="Choi S."/>
            <person name="Ohtsubo E."/>
            <person name="Baba T."/>
            <person name="Wanner B.L."/>
            <person name="Mori H."/>
            <person name="Horiuchi T."/>
        </authorList>
    </citation>
    <scope>NUCLEOTIDE SEQUENCE [LARGE SCALE GENOMIC DNA]</scope>
    <source>
        <strain>K12 / W3110 / ATCC 27325 / DSM 5911</strain>
    </source>
</reference>
<reference key="4">
    <citation type="journal article" date="2014" name="Nature">
        <title>Sulphoglycolysis in Escherichia coli K-12 closes a gap in the biogeochemical sulphur cycle.</title>
        <authorList>
            <person name="Denger K."/>
            <person name="Weiss M."/>
            <person name="Felux A.K."/>
            <person name="Schneider A."/>
            <person name="Mayer C."/>
            <person name="Spiteller D."/>
            <person name="Huhn T."/>
            <person name="Cook A.M."/>
            <person name="Schleheck D."/>
        </authorList>
    </citation>
    <scope>IDENTIFICATION BY MASS SPECTROMETRY</scope>
    <scope>INDUCTION</scope>
    <source>
        <strain>K12</strain>
    </source>
</reference>
<sequence>MSLIKVPCMQITNMHCSGQTVSLAAGDYHATIVTVGAGLAELTFQGCHLVIPHKPEEMPLAHLGKVLIPWPNRIANGCYRYQGQEYQLPINEHSSKAAIHGLLAWRDWQISELTATSVTLTAFLPPSYGYPFMLASQVVYSLNAHTGLSVEIASQNIGTVAAPYGVGIHPYLTCNLTSVDEYLFQLPANQVYAVDEHANPTTLHHVDELDLNFTQAKKIAATKIDHTFKTANDLWEMTITHPQQALSVSLCSDQLWVQVYSGEKLQRQGLAVEPMSCPPNAFNSGIDLLLLESGKPHRLFFNIYGQRK</sequence>
<evidence type="ECO:0000269" key="1">
    <source>
    </source>
</evidence>
<keyword id="KW-1185">Reference proteome</keyword>
<proteinExistence type="evidence at protein level"/>